<keyword id="KW-0175">Coiled coil</keyword>
<keyword id="KW-0436">Ligase</keyword>
<organism>
    <name type="scientific">Staphylococcus aureus (strain USA300)</name>
    <dbReference type="NCBI Taxonomy" id="367830"/>
    <lineage>
        <taxon>Bacteria</taxon>
        <taxon>Bacillati</taxon>
        <taxon>Bacillota</taxon>
        <taxon>Bacilli</taxon>
        <taxon>Bacillales</taxon>
        <taxon>Staphylococcaceae</taxon>
        <taxon>Staphylococcus</taxon>
    </lineage>
</organism>
<sequence length="537" mass="62807">MDCKVVSLNEKDQFIPKIKSSDPVITGLFQYDAAQQTSFEKRMSKENNGREAALANVIREYMSDLKLSSEQELNIQHLANGSKVVIGGQQAGLFGGPLYTFHKIFSIITLSKELTDTHKQQVVPVFWIAGEDHDFDEVNHTFVYNENHGSLHKVKYHTMEMPETTVSRYYPDKAELKQTLKTMFIHMKETVHTQGLLEICDRIIDQYDSWTDMFKALLHETFKAYGVLFIDAQFEPLRKMEAPMFKKILKKHQLLDDAFRATQQRTQNQGLNAMIQTDTNVHLFLHDENMRQLVSYDGKHFKLNKTDKTYIKEEIINIAENQPELFSNNVVTRPLMEEWLFNTVAFVGGPSEIKYWAELKDVFELFDVEMPIVMPRLRITYLNDRIEKLLSKYNIPLEKVLVDGVEGERSKFIREQASHQFIEKVEGMIEQQRRLNKDLLDEVAGNQNNINLVNKNNEIHIQQYDYLLKRYLLNIERENDISMKQFREIQETLHPMGGLQERIWNPLQILNDFGTDVFKPSTYPPLSYTFDHIIIKP</sequence>
<feature type="chain" id="PRO_0000378265" description="Putative cysteine ligase BshC">
    <location>
        <begin position="1"/>
        <end position="537"/>
    </location>
</feature>
<feature type="coiled-coil region" evidence="1">
    <location>
        <begin position="422"/>
        <end position="450"/>
    </location>
</feature>
<name>BSHC_STAA3</name>
<accession>Q2FHR0</accession>
<reference key="1">
    <citation type="journal article" date="2006" name="Lancet">
        <title>Complete genome sequence of USA300, an epidemic clone of community-acquired meticillin-resistant Staphylococcus aureus.</title>
        <authorList>
            <person name="Diep B.A."/>
            <person name="Gill S.R."/>
            <person name="Chang R.F."/>
            <person name="Phan T.H."/>
            <person name="Chen J.H."/>
            <person name="Davidson M.G."/>
            <person name="Lin F."/>
            <person name="Lin J."/>
            <person name="Carleton H.A."/>
            <person name="Mongodin E.F."/>
            <person name="Sensabaugh G.F."/>
            <person name="Perdreau-Remington F."/>
        </authorList>
    </citation>
    <scope>NUCLEOTIDE SEQUENCE [LARGE SCALE GENOMIC DNA]</scope>
    <source>
        <strain>USA300</strain>
    </source>
</reference>
<comment type="function">
    <text evidence="1">Involved in bacillithiol (BSH) biosynthesis. May catalyze the last step of the pathway, the addition of cysteine to glucosamine malate (GlcN-Mal) to generate BSH.</text>
</comment>
<comment type="similarity">
    <text evidence="1">Belongs to the BshC family.</text>
</comment>
<gene>
    <name evidence="1" type="primary">bshC</name>
    <name type="ordered locus">SAUSA300_1071</name>
</gene>
<evidence type="ECO:0000255" key="1">
    <source>
        <dbReference type="HAMAP-Rule" id="MF_01867"/>
    </source>
</evidence>
<protein>
    <recommendedName>
        <fullName evidence="1">Putative cysteine ligase BshC</fullName>
        <ecNumber evidence="1">6.-.-.-</ecNumber>
    </recommendedName>
</protein>
<proteinExistence type="inferred from homology"/>
<dbReference type="EC" id="6.-.-.-" evidence="1"/>
<dbReference type="EMBL" id="CP000255">
    <property type="protein sequence ID" value="ABD22725.1"/>
    <property type="molecule type" value="Genomic_DNA"/>
</dbReference>
<dbReference type="RefSeq" id="WP_000340475.1">
    <property type="nucleotide sequence ID" value="NZ_CP027476.1"/>
</dbReference>
<dbReference type="SMR" id="Q2FHR0"/>
<dbReference type="KEGG" id="saa:SAUSA300_1071"/>
<dbReference type="HOGENOM" id="CLU_022249_0_0_9"/>
<dbReference type="OMA" id="YWMATED"/>
<dbReference type="Proteomes" id="UP000001939">
    <property type="component" value="Chromosome"/>
</dbReference>
<dbReference type="GO" id="GO:0016874">
    <property type="term" value="F:ligase activity"/>
    <property type="evidence" value="ECO:0007669"/>
    <property type="project" value="UniProtKB-UniRule"/>
</dbReference>
<dbReference type="HAMAP" id="MF_01867">
    <property type="entry name" value="BshC"/>
    <property type="match status" value="1"/>
</dbReference>
<dbReference type="InterPro" id="IPR011199">
    <property type="entry name" value="Bacillithiol_biosynth_BshC"/>
</dbReference>
<dbReference type="InterPro" id="IPR055399">
    <property type="entry name" value="CC_BshC"/>
</dbReference>
<dbReference type="InterPro" id="IPR055398">
    <property type="entry name" value="Rossmann-like_BshC"/>
</dbReference>
<dbReference type="NCBIfam" id="TIGR03998">
    <property type="entry name" value="thiol_BshC"/>
    <property type="match status" value="1"/>
</dbReference>
<dbReference type="Pfam" id="PF24850">
    <property type="entry name" value="CC_BshC"/>
    <property type="match status" value="1"/>
</dbReference>
<dbReference type="Pfam" id="PF10079">
    <property type="entry name" value="Rossmann-like_BshC"/>
    <property type="match status" value="1"/>
</dbReference>
<dbReference type="PIRSF" id="PIRSF012535">
    <property type="entry name" value="UCP012535"/>
    <property type="match status" value="1"/>
</dbReference>